<gene>
    <name type="primary">GPN1</name>
</gene>
<feature type="chain" id="PRO_0000056576" description="NADP-dependent glyceraldehyde-3-phosphate dehydrogenase">
    <location>
        <begin position="1"/>
        <end position="498"/>
    </location>
</feature>
<feature type="active site" description="Proton acceptor" evidence="2 3">
    <location>
        <position position="266"/>
    </location>
</feature>
<feature type="active site" description="Nucleophile" evidence="2 3">
    <location>
        <position position="300"/>
    </location>
</feature>
<feature type="binding site" evidence="1">
    <location>
        <position position="118"/>
    </location>
    <ligand>
        <name>substrate</name>
    </ligand>
</feature>
<feature type="binding site" evidence="1">
    <location>
        <begin position="171"/>
        <end position="172"/>
    </location>
    <ligand>
        <name>substrate</name>
    </ligand>
</feature>
<feature type="binding site" evidence="1">
    <location>
        <position position="194"/>
    </location>
    <ligand>
        <name>NADP(+)</name>
        <dbReference type="ChEBI" id="CHEBI:58349"/>
    </ligand>
</feature>
<feature type="binding site" evidence="1">
    <location>
        <position position="197"/>
    </location>
    <ligand>
        <name>NADP(+)</name>
        <dbReference type="ChEBI" id="CHEBI:58349"/>
    </ligand>
</feature>
<feature type="binding site" evidence="1">
    <location>
        <position position="232"/>
    </location>
    <ligand>
        <name>NADP(+)</name>
        <dbReference type="ChEBI" id="CHEBI:58349"/>
    </ligand>
</feature>
<feature type="binding site" evidence="1">
    <location>
        <begin position="247"/>
        <end position="251"/>
    </location>
    <ligand>
        <name>NAD(+)</name>
        <dbReference type="ChEBI" id="CHEBI:57540"/>
    </ligand>
</feature>
<feature type="binding site" evidence="1">
    <location>
        <begin position="299"/>
        <end position="301"/>
    </location>
    <ligand>
        <name>substrate</name>
    </ligand>
</feature>
<feature type="binding site" evidence="1">
    <location>
        <position position="393"/>
    </location>
    <ligand>
        <name>NADP(+)</name>
        <dbReference type="ChEBI" id="CHEBI:58349"/>
    </ligand>
</feature>
<feature type="binding site" evidence="1">
    <location>
        <position position="453"/>
    </location>
    <ligand>
        <name>substrate</name>
    </ligand>
</feature>
<feature type="site" description="Transition state stabilizer" evidence="1">
    <location>
        <position position="171"/>
    </location>
</feature>
<reference key="1">
    <citation type="journal article" date="1994" name="J. Mol. Biol.">
        <title>Non-phosphorylating GAPDH of higher plants is a member of the aldehyde dehydrogenase superfamily with no sequence homology to phosphorylating GAPDH.</title>
        <authorList>
            <person name="Habenicht A."/>
            <person name="Hellman U."/>
            <person name="Cerff R."/>
        </authorList>
    </citation>
    <scope>NUCLEOTIDE SEQUENCE [MRNA]</scope>
    <source>
        <strain>cv. KW5330</strain>
        <tissue>Shoot</tissue>
    </source>
</reference>
<evidence type="ECO:0000250" key="1"/>
<evidence type="ECO:0000255" key="2">
    <source>
        <dbReference type="PROSITE-ProRule" id="PRU10007"/>
    </source>
</evidence>
<evidence type="ECO:0000255" key="3">
    <source>
        <dbReference type="PROSITE-ProRule" id="PRU10008"/>
    </source>
</evidence>
<evidence type="ECO:0000305" key="4"/>
<organism>
    <name type="scientific">Zea mays</name>
    <name type="common">Maize</name>
    <dbReference type="NCBI Taxonomy" id="4577"/>
    <lineage>
        <taxon>Eukaryota</taxon>
        <taxon>Viridiplantae</taxon>
        <taxon>Streptophyta</taxon>
        <taxon>Embryophyta</taxon>
        <taxon>Tracheophyta</taxon>
        <taxon>Spermatophyta</taxon>
        <taxon>Magnoliopsida</taxon>
        <taxon>Liliopsida</taxon>
        <taxon>Poales</taxon>
        <taxon>Poaceae</taxon>
        <taxon>PACMAD clade</taxon>
        <taxon>Panicoideae</taxon>
        <taxon>Andropogonodae</taxon>
        <taxon>Andropogoneae</taxon>
        <taxon>Tripsacinae</taxon>
        <taxon>Zea</taxon>
    </lineage>
</organism>
<accession>Q43272</accession>
<sequence length="498" mass="53146">MALAGTGVFAEILDGEVYRYYADGEWRTSASGKSVAIVNPTTRKTQYRVQACTQEEVNKAMDAAKVAQKAWARTPLWKRADVLHKAAAILKEHKAPIAECLVKEIAKPAKDAVSEVVRSGDLVSYTAEEGVRILGEGKLVVSDSFPGNERNKYCLSSKIPLGVVLAIPPFNYPANLAGSKIGPALIAGNALVLKPPTQGAVAALHMVHCFHLAGFPKGLISCVTGKGSEIGDFLTMHPGVNCISFTGGDTGIAISKKAGMVPLQMELGGKDACIVLEDADLDLVSANIVKGGFSYSGQRCTAVKVVLIMESIADAVVQKVNAKLAKLKVGPPEDDSDITPVVTESSANFIEGLVMDAKEKGATFCQEYRREGNLIWPLLLDHVRPDMRIAWEEPFGPVLPVIRINSVEEGIHHCNASNFGLQGCIFTRDINKAILISDAMETGTVQINSAPARGPDHFSFQGLKDSGIGSQGITNSINMMTKVKSTVINLPSPSYTMG</sequence>
<keyword id="KW-0963">Cytoplasm</keyword>
<keyword id="KW-0521">NADP</keyword>
<keyword id="KW-0560">Oxidoreductase</keyword>
<keyword id="KW-1185">Reference proteome</keyword>
<name>GAPN_MAIZE</name>
<protein>
    <recommendedName>
        <fullName>NADP-dependent glyceraldehyde-3-phosphate dehydrogenase</fullName>
        <ecNumber>1.2.1.9</ecNumber>
    </recommendedName>
    <alternativeName>
        <fullName>Glyceraldehyde-3-phosphate dehydrogenase [NADP(+)]</fullName>
    </alternativeName>
    <alternativeName>
        <fullName>Non-phosphorylating glyceraldehyde 3-phosphate dehydrogenase</fullName>
    </alternativeName>
    <alternativeName>
        <fullName>Triosephosphate dehydrogenase</fullName>
    </alternativeName>
</protein>
<proteinExistence type="evidence at transcript level"/>
<comment type="function">
    <text>Important as a means of generating NADPH for biosynthetic reactions.</text>
</comment>
<comment type="catalytic activity">
    <reaction>
        <text>D-glyceraldehyde 3-phosphate + NADP(+) + H2O = (2R)-3-phosphoglycerate + NADPH + 2 H(+)</text>
        <dbReference type="Rhea" id="RHEA:14669"/>
        <dbReference type="ChEBI" id="CHEBI:15377"/>
        <dbReference type="ChEBI" id="CHEBI:15378"/>
        <dbReference type="ChEBI" id="CHEBI:57783"/>
        <dbReference type="ChEBI" id="CHEBI:58272"/>
        <dbReference type="ChEBI" id="CHEBI:58349"/>
        <dbReference type="ChEBI" id="CHEBI:59776"/>
        <dbReference type="EC" id="1.2.1.9"/>
    </reaction>
</comment>
<comment type="subcellular location">
    <subcellularLocation>
        <location>Cytoplasm</location>
    </subcellularLocation>
</comment>
<comment type="similarity">
    <text evidence="4">Belongs to the aldehyde dehydrogenase family.</text>
</comment>
<dbReference type="EC" id="1.2.1.9"/>
<dbReference type="EMBL" id="X75326">
    <property type="protein sequence ID" value="CAA53075.1"/>
    <property type="molecule type" value="mRNA"/>
</dbReference>
<dbReference type="PIR" id="S43833">
    <property type="entry name" value="S43833"/>
</dbReference>
<dbReference type="RefSeq" id="NP_001105589.1">
    <property type="nucleotide sequence ID" value="NM_001112119.1"/>
</dbReference>
<dbReference type="SMR" id="Q43272"/>
<dbReference type="FunCoup" id="Q43272">
    <property type="interactions" value="771"/>
</dbReference>
<dbReference type="STRING" id="4577.Q43272"/>
<dbReference type="PaxDb" id="4577-GRMZM2G035268_P01"/>
<dbReference type="GeneID" id="542583"/>
<dbReference type="KEGG" id="zma:542583"/>
<dbReference type="MaizeGDB" id="78926"/>
<dbReference type="eggNOG" id="KOG2450">
    <property type="taxonomic scope" value="Eukaryota"/>
</dbReference>
<dbReference type="InParanoid" id="Q43272"/>
<dbReference type="OrthoDB" id="310895at2759"/>
<dbReference type="SABIO-RK" id="Q43272"/>
<dbReference type="Proteomes" id="UP000007305">
    <property type="component" value="Unplaced"/>
</dbReference>
<dbReference type="ExpressionAtlas" id="Q43272">
    <property type="expression patterns" value="baseline and differential"/>
</dbReference>
<dbReference type="GO" id="GO:0005737">
    <property type="term" value="C:cytoplasm"/>
    <property type="evidence" value="ECO:0007669"/>
    <property type="project" value="UniProtKB-SubCell"/>
</dbReference>
<dbReference type="GO" id="GO:0008886">
    <property type="term" value="F:glyceraldehyde-3-phosphate dehydrogenase (NADP+) (non-phosphorylating) activity"/>
    <property type="evidence" value="ECO:0007669"/>
    <property type="project" value="UniProtKB-EC"/>
</dbReference>
<dbReference type="GO" id="GO:0008911">
    <property type="term" value="F:lactaldehyde dehydrogenase (NAD+) activity"/>
    <property type="evidence" value="ECO:0000318"/>
    <property type="project" value="GO_Central"/>
</dbReference>
<dbReference type="CDD" id="cd07082">
    <property type="entry name" value="ALDH_F11_NP-GAPDH"/>
    <property type="match status" value="1"/>
</dbReference>
<dbReference type="FunFam" id="3.40.309.10:FF:000016">
    <property type="entry name" value="NADP-dependent glyceraldehyde-3-phosphate dehydrogenase"/>
    <property type="match status" value="1"/>
</dbReference>
<dbReference type="FunFam" id="3.40.605.10:FF:000013">
    <property type="entry name" value="NADP-dependent glyceraldehyde-3-phosphate dehydrogenase"/>
    <property type="match status" value="1"/>
</dbReference>
<dbReference type="Gene3D" id="3.40.605.10">
    <property type="entry name" value="Aldehyde Dehydrogenase, Chain A, domain 1"/>
    <property type="match status" value="1"/>
</dbReference>
<dbReference type="Gene3D" id="3.40.309.10">
    <property type="entry name" value="Aldehyde Dehydrogenase, Chain A, domain 2"/>
    <property type="match status" value="1"/>
</dbReference>
<dbReference type="InterPro" id="IPR016161">
    <property type="entry name" value="Ald_DH/histidinol_DH"/>
</dbReference>
<dbReference type="InterPro" id="IPR016163">
    <property type="entry name" value="Ald_DH_C"/>
</dbReference>
<dbReference type="InterPro" id="IPR016160">
    <property type="entry name" value="Ald_DH_CS_CYS"/>
</dbReference>
<dbReference type="InterPro" id="IPR029510">
    <property type="entry name" value="Ald_DH_CS_GLU"/>
</dbReference>
<dbReference type="InterPro" id="IPR016162">
    <property type="entry name" value="Ald_DH_N"/>
</dbReference>
<dbReference type="InterPro" id="IPR015590">
    <property type="entry name" value="Aldehyde_DH_dom"/>
</dbReference>
<dbReference type="InterPro" id="IPR051020">
    <property type="entry name" value="ALDH-related_metabolic_enz"/>
</dbReference>
<dbReference type="PANTHER" id="PTHR42991">
    <property type="entry name" value="ALDEHYDE DEHYDROGENASE"/>
    <property type="match status" value="1"/>
</dbReference>
<dbReference type="PANTHER" id="PTHR42991:SF1">
    <property type="entry name" value="ALDEHYDE DEHYDROGENASE"/>
    <property type="match status" value="1"/>
</dbReference>
<dbReference type="Pfam" id="PF00171">
    <property type="entry name" value="Aldedh"/>
    <property type="match status" value="1"/>
</dbReference>
<dbReference type="SUPFAM" id="SSF53720">
    <property type="entry name" value="ALDH-like"/>
    <property type="match status" value="1"/>
</dbReference>
<dbReference type="PROSITE" id="PS00070">
    <property type="entry name" value="ALDEHYDE_DEHYDR_CYS"/>
    <property type="match status" value="1"/>
</dbReference>
<dbReference type="PROSITE" id="PS00687">
    <property type="entry name" value="ALDEHYDE_DEHYDR_GLU"/>
    <property type="match status" value="1"/>
</dbReference>